<gene>
    <name type="primary">yicN</name>
    <name type="ordered locus">b3663</name>
    <name type="ordered locus">JW5637</name>
</gene>
<proteinExistence type="predicted"/>
<feature type="chain" id="PRO_0000169618" description="Uncharacterized protein YicN">
    <location>
        <begin position="1"/>
        <end position="150"/>
    </location>
</feature>
<sequence length="150" mass="17219">MIWIMLATLAVVFVVGFRVLTSGARKAIRRLSDRLNIDVVPVESMVDQMGKSAGDEFLRYLHRPDESHLQNAAQVLLIWQIVIVDGSEQNLLQWHRILQKARLAAPITDAQVRLALGFLRETEPEMQDINAFQMRYNAFFQPAEGVHWLH</sequence>
<protein>
    <recommendedName>
        <fullName>Uncharacterized protein YicN</fullName>
    </recommendedName>
</protein>
<dbReference type="EMBL" id="L10328">
    <property type="protein sequence ID" value="AAA62015.1"/>
    <property type="status" value="ALT_INIT"/>
    <property type="molecule type" value="Genomic_DNA"/>
</dbReference>
<dbReference type="EMBL" id="U00096">
    <property type="protein sequence ID" value="AAC76686.2"/>
    <property type="molecule type" value="Genomic_DNA"/>
</dbReference>
<dbReference type="EMBL" id="AP009048">
    <property type="protein sequence ID" value="BAE77630.1"/>
    <property type="molecule type" value="Genomic_DNA"/>
</dbReference>
<dbReference type="PIR" id="H65167">
    <property type="entry name" value="H65167"/>
</dbReference>
<dbReference type="RefSeq" id="NP_418119.2">
    <property type="nucleotide sequence ID" value="NC_000913.3"/>
</dbReference>
<dbReference type="RefSeq" id="WP_001295241.1">
    <property type="nucleotide sequence ID" value="NZ_SSZK01000043.1"/>
</dbReference>
<dbReference type="SMR" id="P0ADL3"/>
<dbReference type="BioGRID" id="4261589">
    <property type="interactions" value="13"/>
</dbReference>
<dbReference type="FunCoup" id="P0ADL3">
    <property type="interactions" value="141"/>
</dbReference>
<dbReference type="STRING" id="511145.b3663"/>
<dbReference type="PaxDb" id="511145-b3663"/>
<dbReference type="EnsemblBacteria" id="AAC76686">
    <property type="protein sequence ID" value="AAC76686"/>
    <property type="gene ID" value="b3663"/>
</dbReference>
<dbReference type="GeneID" id="948173"/>
<dbReference type="KEGG" id="ecj:JW5637"/>
<dbReference type="KEGG" id="eco:b3663"/>
<dbReference type="KEGG" id="ecoc:C3026_19855"/>
<dbReference type="PATRIC" id="fig|511145.12.peg.3785"/>
<dbReference type="EchoBASE" id="EB1641"/>
<dbReference type="eggNOG" id="ENOG502ZBKK">
    <property type="taxonomic scope" value="Bacteria"/>
</dbReference>
<dbReference type="HOGENOM" id="CLU_145987_0_0_6"/>
<dbReference type="InParanoid" id="P0ADL3"/>
<dbReference type="OMA" id="ERPNEAH"/>
<dbReference type="OrthoDB" id="7062660at2"/>
<dbReference type="PhylomeDB" id="P0ADL3"/>
<dbReference type="BioCyc" id="EcoCyc:EG11690-MONOMER"/>
<dbReference type="PRO" id="PR:P0ADL3"/>
<dbReference type="Proteomes" id="UP000000625">
    <property type="component" value="Chromosome"/>
</dbReference>
<dbReference type="InterPro" id="IPR009587">
    <property type="entry name" value="DUF1198"/>
</dbReference>
<dbReference type="Pfam" id="PF06711">
    <property type="entry name" value="DUF1198"/>
    <property type="match status" value="1"/>
</dbReference>
<reference key="1">
    <citation type="journal article" date="1993" name="Genomics">
        <title>DNA sequence and analysis of 136 kilobases of the Escherichia coli genome: organizational symmetry around the origin of replication.</title>
        <authorList>
            <person name="Burland V.D."/>
            <person name="Plunkett G. III"/>
            <person name="Daniels D.L."/>
            <person name="Blattner F.R."/>
        </authorList>
    </citation>
    <scope>NUCLEOTIDE SEQUENCE [LARGE SCALE GENOMIC DNA]</scope>
    <source>
        <strain>K12 / MG1655 / ATCC 47076</strain>
    </source>
</reference>
<reference key="2">
    <citation type="journal article" date="1997" name="Science">
        <title>The complete genome sequence of Escherichia coli K-12.</title>
        <authorList>
            <person name="Blattner F.R."/>
            <person name="Plunkett G. III"/>
            <person name="Bloch C.A."/>
            <person name="Perna N.T."/>
            <person name="Burland V."/>
            <person name="Riley M."/>
            <person name="Collado-Vides J."/>
            <person name="Glasner J.D."/>
            <person name="Rode C.K."/>
            <person name="Mayhew G.F."/>
            <person name="Gregor J."/>
            <person name="Davis N.W."/>
            <person name="Kirkpatrick H.A."/>
            <person name="Goeden M.A."/>
            <person name="Rose D.J."/>
            <person name="Mau B."/>
            <person name="Shao Y."/>
        </authorList>
    </citation>
    <scope>NUCLEOTIDE SEQUENCE [LARGE SCALE GENOMIC DNA]</scope>
    <source>
        <strain>K12 / MG1655 / ATCC 47076</strain>
    </source>
</reference>
<reference key="3">
    <citation type="journal article" date="2006" name="Mol. Syst. Biol.">
        <title>Highly accurate genome sequences of Escherichia coli K-12 strains MG1655 and W3110.</title>
        <authorList>
            <person name="Hayashi K."/>
            <person name="Morooka N."/>
            <person name="Yamamoto Y."/>
            <person name="Fujita K."/>
            <person name="Isono K."/>
            <person name="Choi S."/>
            <person name="Ohtsubo E."/>
            <person name="Baba T."/>
            <person name="Wanner B.L."/>
            <person name="Mori H."/>
            <person name="Horiuchi T."/>
        </authorList>
    </citation>
    <scope>NUCLEOTIDE SEQUENCE [LARGE SCALE GENOMIC DNA]</scope>
    <source>
        <strain>K12 / W3110 / ATCC 27325 / DSM 5911</strain>
    </source>
</reference>
<accession>P0ADL3</accession>
<accession>P31439</accession>
<accession>Q2M7X6</accession>
<keyword id="KW-1185">Reference proteome</keyword>
<evidence type="ECO:0000305" key="1"/>
<name>YICN_ECOLI</name>
<organism>
    <name type="scientific">Escherichia coli (strain K12)</name>
    <dbReference type="NCBI Taxonomy" id="83333"/>
    <lineage>
        <taxon>Bacteria</taxon>
        <taxon>Pseudomonadati</taxon>
        <taxon>Pseudomonadota</taxon>
        <taxon>Gammaproteobacteria</taxon>
        <taxon>Enterobacterales</taxon>
        <taxon>Enterobacteriaceae</taxon>
        <taxon>Escherichia</taxon>
    </lineage>
</organism>
<comment type="sequence caution" evidence="1">
    <conflict type="erroneous initiation">
        <sequence resource="EMBL-CDS" id="AAA62015"/>
    </conflict>
</comment>